<sequence length="547" mass="61157">MSLSSLLPTPTNAIWDREDERRLVARGAPKIGALVSAKIAAPPYGQRKDWVPHTDADFGDGGAFPEIHVAQYPLGLGAPGNVGKKSDALAVRLDDKGKVKYDAIARQGHGKDKIVYSSISQLLPAEVLAEDADELQRPDEETVMETTEETRLALEKLTNQKITSALPVRHAQKAGPAQYIRYTPSQQGDTFNSGAKQRVIRMVEAQLDPMEPPKFRINKKIPRGPPSPPAPVLHSPSRKVTVKEQKEWKIPPCISNWKNAKGYTIPLDKRLAADGRGLQQVHINEKFAKMAEALYIADRKAREAVEARSQLEKKLAQKEKEKKEDMLRMMAQRAREERAGLRNPEAAEPSGSGATGSEVRERNDLRAERQRERQRDRNLQRAAPEKRSKLQKERERDISEQIALGLPAKSAGNGETLFDQRLFNTTKGMDSGYGDDEAYNVYDKPWRDSNTLGAHIYRPSKQADSDNYGGDLDAIVNTKRFVPDKQFSGASKEAAAGQRSGPVEFEKEEDPFGLDQFLNMAKKAPKRAEEKNNERSSHSDRKRSKRD</sequence>
<name>BX42_DROME</name>
<organism>
    <name type="scientific">Drosophila melanogaster</name>
    <name type="common">Fruit fly</name>
    <dbReference type="NCBI Taxonomy" id="7227"/>
    <lineage>
        <taxon>Eukaryota</taxon>
        <taxon>Metazoa</taxon>
        <taxon>Ecdysozoa</taxon>
        <taxon>Arthropoda</taxon>
        <taxon>Hexapoda</taxon>
        <taxon>Insecta</taxon>
        <taxon>Pterygota</taxon>
        <taxon>Neoptera</taxon>
        <taxon>Endopterygota</taxon>
        <taxon>Diptera</taxon>
        <taxon>Brachycera</taxon>
        <taxon>Muscomorpha</taxon>
        <taxon>Ephydroidea</taxon>
        <taxon>Drosophilidae</taxon>
        <taxon>Drosophila</taxon>
        <taxon>Sophophora</taxon>
    </lineage>
</organism>
<gene>
    <name type="primary">Bx42</name>
    <name type="ORF">CG8264</name>
</gene>
<proteinExistence type="evidence at protein level"/>
<comment type="function">
    <text>May play a role in chromatin structure and function.</text>
</comment>
<comment type="subcellular location">
    <subcellularLocation>
        <location>Nucleus</location>
    </subcellularLocation>
</comment>
<comment type="developmental stage">
    <text>Two transcripts are detected of sizes 1.9 and 2.2 kb. Both are detected soon after fertilization and show relatively constant expression during the first 2/3 of embryogenesis. In 0-3 hours embryos, the smaller transcript is predominant and the levels of the two transcripts are somewhat reduced at the later stages of development, but they are found in approximately constant amounts during larval, pupal and adult stages. The smaller transcript is suspected to be a maternal transcript.</text>
</comment>
<comment type="similarity">
    <text evidence="3">Belongs to the SNW family.</text>
</comment>
<evidence type="ECO:0000256" key="1">
    <source>
        <dbReference type="SAM" id="MobiDB-lite"/>
    </source>
</evidence>
<evidence type="ECO:0000269" key="2">
    <source>
    </source>
</evidence>
<evidence type="ECO:0000305" key="3"/>
<dbReference type="EMBL" id="X64536">
    <property type="protein sequence ID" value="CAA45834.1"/>
    <property type="molecule type" value="Genomic_DNA"/>
</dbReference>
<dbReference type="EMBL" id="AE014298">
    <property type="protein sequence ID" value="AAF46444.2"/>
    <property type="molecule type" value="Genomic_DNA"/>
</dbReference>
<dbReference type="EMBL" id="AY113364">
    <property type="protein sequence ID" value="AAM29369.1"/>
    <property type="molecule type" value="mRNA"/>
</dbReference>
<dbReference type="PIR" id="A56575">
    <property type="entry name" value="A56575"/>
</dbReference>
<dbReference type="RefSeq" id="NP_001259370.1">
    <property type="nucleotide sequence ID" value="NM_001272441.2"/>
</dbReference>
<dbReference type="RefSeq" id="NP_511093.2">
    <property type="nucleotide sequence ID" value="NM_078538.4"/>
</dbReference>
<dbReference type="SMR" id="P39736"/>
<dbReference type="BioGRID" id="58295">
    <property type="interactions" value="25"/>
</dbReference>
<dbReference type="DIP" id="DIP-17877N"/>
<dbReference type="FunCoup" id="P39736">
    <property type="interactions" value="1923"/>
</dbReference>
<dbReference type="IntAct" id="P39736">
    <property type="interactions" value="8"/>
</dbReference>
<dbReference type="MINT" id="P39736"/>
<dbReference type="STRING" id="7227.FBpp0305943"/>
<dbReference type="iPTMnet" id="P39736"/>
<dbReference type="PaxDb" id="7227-FBpp0305943"/>
<dbReference type="DNASU" id="31840"/>
<dbReference type="EnsemblMetazoa" id="FBtr0071350">
    <property type="protein sequence ID" value="FBpp0071285"/>
    <property type="gene ID" value="FBgn0004856"/>
</dbReference>
<dbReference type="EnsemblMetazoa" id="FBtr0333809">
    <property type="protein sequence ID" value="FBpp0305943"/>
    <property type="gene ID" value="FBgn0004856"/>
</dbReference>
<dbReference type="GeneID" id="31840"/>
<dbReference type="KEGG" id="dme:Dmel_CG8264"/>
<dbReference type="AGR" id="FB:FBgn0004856"/>
<dbReference type="CTD" id="31840"/>
<dbReference type="FlyBase" id="FBgn0004856">
    <property type="gene designation" value="Bx42"/>
</dbReference>
<dbReference type="VEuPathDB" id="VectorBase:FBgn0004856"/>
<dbReference type="eggNOG" id="KOG2441">
    <property type="taxonomic scope" value="Eukaryota"/>
</dbReference>
<dbReference type="GeneTree" id="ENSGT00390000010423"/>
<dbReference type="HOGENOM" id="CLU_006601_2_1_1"/>
<dbReference type="InParanoid" id="P39736"/>
<dbReference type="OMA" id="YGQRRGW"/>
<dbReference type="OrthoDB" id="666364at2759"/>
<dbReference type="PhylomeDB" id="P39736"/>
<dbReference type="Reactome" id="R-DME-2173795">
    <property type="pathway name" value="Downregulation of SMAD2/3:SMAD4 transcriptional activity"/>
</dbReference>
<dbReference type="Reactome" id="R-DME-350054">
    <property type="pathway name" value="Notch-HLH transcription pathway"/>
</dbReference>
<dbReference type="Reactome" id="R-DME-72163">
    <property type="pathway name" value="mRNA Splicing - Major Pathway"/>
</dbReference>
<dbReference type="SignaLink" id="P39736"/>
<dbReference type="BioGRID-ORCS" id="31840">
    <property type="hits" value="0 hits in 1 CRISPR screen"/>
</dbReference>
<dbReference type="GenomeRNAi" id="31840"/>
<dbReference type="PRO" id="PR:P39736"/>
<dbReference type="Proteomes" id="UP000000803">
    <property type="component" value="Chromosome X"/>
</dbReference>
<dbReference type="Bgee" id="FBgn0004856">
    <property type="expression patterns" value="Expressed in oviduct (Drosophila) and 153 other cell types or tissues"/>
</dbReference>
<dbReference type="ExpressionAtlas" id="P39736">
    <property type="expression patterns" value="baseline and differential"/>
</dbReference>
<dbReference type="GO" id="GO:0071013">
    <property type="term" value="C:catalytic step 2 spliceosome"/>
    <property type="evidence" value="ECO:0007005"/>
    <property type="project" value="FlyBase"/>
</dbReference>
<dbReference type="GO" id="GO:0000785">
    <property type="term" value="C:chromatin"/>
    <property type="evidence" value="ECO:0000303"/>
    <property type="project" value="FlyBase"/>
</dbReference>
<dbReference type="GO" id="GO:0071011">
    <property type="term" value="C:precatalytic spliceosome"/>
    <property type="evidence" value="ECO:0007005"/>
    <property type="project" value="FlyBase"/>
</dbReference>
<dbReference type="GO" id="GO:0000974">
    <property type="term" value="C:Prp19 complex"/>
    <property type="evidence" value="ECO:0000314"/>
    <property type="project" value="FlyBase"/>
</dbReference>
<dbReference type="GO" id="GO:0003677">
    <property type="term" value="F:DNA binding"/>
    <property type="evidence" value="ECO:0007669"/>
    <property type="project" value="UniProtKB-KW"/>
</dbReference>
<dbReference type="GO" id="GO:0001700">
    <property type="term" value="P:embryonic development via the syncytial blastoderm"/>
    <property type="evidence" value="ECO:0000315"/>
    <property type="project" value="FlyBase"/>
</dbReference>
<dbReference type="GO" id="GO:0035214">
    <property type="term" value="P:eye-antennal disc development"/>
    <property type="evidence" value="ECO:0000315"/>
    <property type="project" value="FlyBase"/>
</dbReference>
<dbReference type="GO" id="GO:0000398">
    <property type="term" value="P:mRNA splicing, via spliceosome"/>
    <property type="evidence" value="ECO:0000305"/>
    <property type="project" value="FlyBase"/>
</dbReference>
<dbReference type="InterPro" id="IPR017862">
    <property type="entry name" value="SKI-int_prot_SKIP"/>
</dbReference>
<dbReference type="InterPro" id="IPR004015">
    <property type="entry name" value="SKI-int_prot_SKIP_SNW-dom"/>
</dbReference>
<dbReference type="PANTHER" id="PTHR12096">
    <property type="entry name" value="NUCLEAR PROTEIN SKIP-RELATED"/>
    <property type="match status" value="1"/>
</dbReference>
<dbReference type="Pfam" id="PF02731">
    <property type="entry name" value="SKIP_SNW"/>
    <property type="match status" value="1"/>
</dbReference>
<accession>P39736</accession>
<accession>Q9W390</accession>
<keyword id="KW-0238">DNA-binding</keyword>
<keyword id="KW-0539">Nucleus</keyword>
<keyword id="KW-0597">Phosphoprotein</keyword>
<keyword id="KW-1185">Reference proteome</keyword>
<reference key="1">
    <citation type="journal article" date="1992" name="Chromosoma">
        <title>The Drosophila nuclear protein Bx42, which is found in many puffs on polytene chromosomes, is highly charged.</title>
        <authorList>
            <person name="Wieland C."/>
            <person name="Mann S."/>
            <person name="von Besser H."/>
            <person name="Saumweber H."/>
        </authorList>
    </citation>
    <scope>NUCLEOTIDE SEQUENCE [GENOMIC DNA]</scope>
    <source>
        <strain>Oregon-R</strain>
        <tissue>Embryo</tissue>
    </source>
</reference>
<reference key="2">
    <citation type="journal article" date="2000" name="Science">
        <title>The genome sequence of Drosophila melanogaster.</title>
        <authorList>
            <person name="Adams M.D."/>
            <person name="Celniker S.E."/>
            <person name="Holt R.A."/>
            <person name="Evans C.A."/>
            <person name="Gocayne J.D."/>
            <person name="Amanatides P.G."/>
            <person name="Scherer S.E."/>
            <person name="Li P.W."/>
            <person name="Hoskins R.A."/>
            <person name="Galle R.F."/>
            <person name="George R.A."/>
            <person name="Lewis S.E."/>
            <person name="Richards S."/>
            <person name="Ashburner M."/>
            <person name="Henderson S.N."/>
            <person name="Sutton G.G."/>
            <person name="Wortman J.R."/>
            <person name="Yandell M.D."/>
            <person name="Zhang Q."/>
            <person name="Chen L.X."/>
            <person name="Brandon R.C."/>
            <person name="Rogers Y.-H.C."/>
            <person name="Blazej R.G."/>
            <person name="Champe M."/>
            <person name="Pfeiffer B.D."/>
            <person name="Wan K.H."/>
            <person name="Doyle C."/>
            <person name="Baxter E.G."/>
            <person name="Helt G."/>
            <person name="Nelson C.R."/>
            <person name="Miklos G.L.G."/>
            <person name="Abril J.F."/>
            <person name="Agbayani A."/>
            <person name="An H.-J."/>
            <person name="Andrews-Pfannkoch C."/>
            <person name="Baldwin D."/>
            <person name="Ballew R.M."/>
            <person name="Basu A."/>
            <person name="Baxendale J."/>
            <person name="Bayraktaroglu L."/>
            <person name="Beasley E.M."/>
            <person name="Beeson K.Y."/>
            <person name="Benos P.V."/>
            <person name="Berman B.P."/>
            <person name="Bhandari D."/>
            <person name="Bolshakov S."/>
            <person name="Borkova D."/>
            <person name="Botchan M.R."/>
            <person name="Bouck J."/>
            <person name="Brokstein P."/>
            <person name="Brottier P."/>
            <person name="Burtis K.C."/>
            <person name="Busam D.A."/>
            <person name="Butler H."/>
            <person name="Cadieu E."/>
            <person name="Center A."/>
            <person name="Chandra I."/>
            <person name="Cherry J.M."/>
            <person name="Cawley S."/>
            <person name="Dahlke C."/>
            <person name="Davenport L.B."/>
            <person name="Davies P."/>
            <person name="de Pablos B."/>
            <person name="Delcher A."/>
            <person name="Deng Z."/>
            <person name="Mays A.D."/>
            <person name="Dew I."/>
            <person name="Dietz S.M."/>
            <person name="Dodson K."/>
            <person name="Doup L.E."/>
            <person name="Downes M."/>
            <person name="Dugan-Rocha S."/>
            <person name="Dunkov B.C."/>
            <person name="Dunn P."/>
            <person name="Durbin K.J."/>
            <person name="Evangelista C.C."/>
            <person name="Ferraz C."/>
            <person name="Ferriera S."/>
            <person name="Fleischmann W."/>
            <person name="Fosler C."/>
            <person name="Gabrielian A.E."/>
            <person name="Garg N.S."/>
            <person name="Gelbart W.M."/>
            <person name="Glasser K."/>
            <person name="Glodek A."/>
            <person name="Gong F."/>
            <person name="Gorrell J.H."/>
            <person name="Gu Z."/>
            <person name="Guan P."/>
            <person name="Harris M."/>
            <person name="Harris N.L."/>
            <person name="Harvey D.A."/>
            <person name="Heiman T.J."/>
            <person name="Hernandez J.R."/>
            <person name="Houck J."/>
            <person name="Hostin D."/>
            <person name="Houston K.A."/>
            <person name="Howland T.J."/>
            <person name="Wei M.-H."/>
            <person name="Ibegwam C."/>
            <person name="Jalali M."/>
            <person name="Kalush F."/>
            <person name="Karpen G.H."/>
            <person name="Ke Z."/>
            <person name="Kennison J.A."/>
            <person name="Ketchum K.A."/>
            <person name="Kimmel B.E."/>
            <person name="Kodira C.D."/>
            <person name="Kraft C.L."/>
            <person name="Kravitz S."/>
            <person name="Kulp D."/>
            <person name="Lai Z."/>
            <person name="Lasko P."/>
            <person name="Lei Y."/>
            <person name="Levitsky A.A."/>
            <person name="Li J.H."/>
            <person name="Li Z."/>
            <person name="Liang Y."/>
            <person name="Lin X."/>
            <person name="Liu X."/>
            <person name="Mattei B."/>
            <person name="McIntosh T.C."/>
            <person name="McLeod M.P."/>
            <person name="McPherson D."/>
            <person name="Merkulov G."/>
            <person name="Milshina N.V."/>
            <person name="Mobarry C."/>
            <person name="Morris J."/>
            <person name="Moshrefi A."/>
            <person name="Mount S.M."/>
            <person name="Moy M."/>
            <person name="Murphy B."/>
            <person name="Murphy L."/>
            <person name="Muzny D.M."/>
            <person name="Nelson D.L."/>
            <person name="Nelson D.R."/>
            <person name="Nelson K.A."/>
            <person name="Nixon K."/>
            <person name="Nusskern D.R."/>
            <person name="Pacleb J.M."/>
            <person name="Palazzolo M."/>
            <person name="Pittman G.S."/>
            <person name="Pan S."/>
            <person name="Pollard J."/>
            <person name="Puri V."/>
            <person name="Reese M.G."/>
            <person name="Reinert K."/>
            <person name="Remington K."/>
            <person name="Saunders R.D.C."/>
            <person name="Scheeler F."/>
            <person name="Shen H."/>
            <person name="Shue B.C."/>
            <person name="Siden-Kiamos I."/>
            <person name="Simpson M."/>
            <person name="Skupski M.P."/>
            <person name="Smith T.J."/>
            <person name="Spier E."/>
            <person name="Spradling A.C."/>
            <person name="Stapleton M."/>
            <person name="Strong R."/>
            <person name="Sun E."/>
            <person name="Svirskas R."/>
            <person name="Tector C."/>
            <person name="Turner R."/>
            <person name="Venter E."/>
            <person name="Wang A.H."/>
            <person name="Wang X."/>
            <person name="Wang Z.-Y."/>
            <person name="Wassarman D.A."/>
            <person name="Weinstock G.M."/>
            <person name="Weissenbach J."/>
            <person name="Williams S.M."/>
            <person name="Woodage T."/>
            <person name="Worley K.C."/>
            <person name="Wu D."/>
            <person name="Yang S."/>
            <person name="Yao Q.A."/>
            <person name="Ye J."/>
            <person name="Yeh R.-F."/>
            <person name="Zaveri J.S."/>
            <person name="Zhan M."/>
            <person name="Zhang G."/>
            <person name="Zhao Q."/>
            <person name="Zheng L."/>
            <person name="Zheng X.H."/>
            <person name="Zhong F.N."/>
            <person name="Zhong W."/>
            <person name="Zhou X."/>
            <person name="Zhu S.C."/>
            <person name="Zhu X."/>
            <person name="Smith H.O."/>
            <person name="Gibbs R.A."/>
            <person name="Myers E.W."/>
            <person name="Rubin G.M."/>
            <person name="Venter J.C."/>
        </authorList>
    </citation>
    <scope>NUCLEOTIDE SEQUENCE [LARGE SCALE GENOMIC DNA]</scope>
    <source>
        <strain>Berkeley</strain>
    </source>
</reference>
<reference key="3">
    <citation type="journal article" date="2002" name="Genome Biol.">
        <title>Annotation of the Drosophila melanogaster euchromatic genome: a systematic review.</title>
        <authorList>
            <person name="Misra S."/>
            <person name="Crosby M.A."/>
            <person name="Mungall C.J."/>
            <person name="Matthews B.B."/>
            <person name="Campbell K.S."/>
            <person name="Hradecky P."/>
            <person name="Huang Y."/>
            <person name="Kaminker J.S."/>
            <person name="Millburn G.H."/>
            <person name="Prochnik S.E."/>
            <person name="Smith C.D."/>
            <person name="Tupy J.L."/>
            <person name="Whitfield E.J."/>
            <person name="Bayraktaroglu L."/>
            <person name="Berman B.P."/>
            <person name="Bettencourt B.R."/>
            <person name="Celniker S.E."/>
            <person name="de Grey A.D.N.J."/>
            <person name="Drysdale R.A."/>
            <person name="Harris N.L."/>
            <person name="Richter J."/>
            <person name="Russo S."/>
            <person name="Schroeder A.J."/>
            <person name="Shu S.Q."/>
            <person name="Stapleton M."/>
            <person name="Yamada C."/>
            <person name="Ashburner M."/>
            <person name="Gelbart W.M."/>
            <person name="Rubin G.M."/>
            <person name="Lewis S.E."/>
        </authorList>
    </citation>
    <scope>GENOME REANNOTATION</scope>
    <source>
        <strain>Berkeley</strain>
    </source>
</reference>
<reference key="4">
    <citation type="journal article" date="2002" name="Genome Biol.">
        <title>A Drosophila full-length cDNA resource.</title>
        <authorList>
            <person name="Stapleton M."/>
            <person name="Carlson J.W."/>
            <person name="Brokstein P."/>
            <person name="Yu C."/>
            <person name="Champe M."/>
            <person name="George R.A."/>
            <person name="Guarin H."/>
            <person name="Kronmiller B."/>
            <person name="Pacleb J.M."/>
            <person name="Park S."/>
            <person name="Wan K.H."/>
            <person name="Rubin G.M."/>
            <person name="Celniker S.E."/>
        </authorList>
    </citation>
    <scope>NUCLEOTIDE SEQUENCE [LARGE SCALE MRNA]</scope>
    <source>
        <strain>Berkeley</strain>
        <tissue>Embryo</tissue>
    </source>
</reference>
<reference key="5">
    <citation type="journal article" date="2008" name="J. Proteome Res.">
        <title>Phosphoproteome analysis of Drosophila melanogaster embryos.</title>
        <authorList>
            <person name="Zhai B."/>
            <person name="Villen J."/>
            <person name="Beausoleil S.A."/>
            <person name="Mintseris J."/>
            <person name="Gygi S.P."/>
        </authorList>
    </citation>
    <scope>PHOSPHORYLATION [LARGE SCALE ANALYSIS] AT SER-227 AND SER-235</scope>
    <scope>IDENTIFICATION BY MASS SPECTROMETRY</scope>
    <source>
        <tissue>Embryo</tissue>
    </source>
</reference>
<protein>
    <recommendedName>
        <fullName>Puff-specific protein Bx42</fullName>
    </recommendedName>
</protein>
<feature type="chain" id="PRO_0000084813" description="Puff-specific protein Bx42">
    <location>
        <begin position="1"/>
        <end position="547"/>
    </location>
</feature>
<feature type="region of interest" description="SNW">
    <location>
        <begin position="177"/>
        <end position="343"/>
    </location>
</feature>
<feature type="region of interest" description="Disordered" evidence="1">
    <location>
        <begin position="333"/>
        <end position="398"/>
    </location>
</feature>
<feature type="region of interest" description="Disordered" evidence="1">
    <location>
        <begin position="486"/>
        <end position="547"/>
    </location>
</feature>
<feature type="compositionally biased region" description="Basic and acidic residues" evidence="1">
    <location>
        <begin position="358"/>
        <end position="398"/>
    </location>
</feature>
<feature type="compositionally biased region" description="Basic and acidic residues" evidence="1">
    <location>
        <begin position="526"/>
        <end position="539"/>
    </location>
</feature>
<feature type="modified residue" description="Phosphoserine" evidence="2">
    <location>
        <position position="227"/>
    </location>
</feature>
<feature type="modified residue" description="Phosphoserine" evidence="2">
    <location>
        <position position="235"/>
    </location>
</feature>